<gene>
    <name evidence="1" type="primary">rpmD</name>
    <name type="ordered locus">PSPPH_4574</name>
</gene>
<comment type="subunit">
    <text evidence="1">Part of the 50S ribosomal subunit.</text>
</comment>
<comment type="similarity">
    <text evidence="1">Belongs to the universal ribosomal protein uL30 family.</text>
</comment>
<organism>
    <name type="scientific">Pseudomonas savastanoi pv. phaseolicola (strain 1448A / Race 6)</name>
    <name type="common">Pseudomonas syringae pv. phaseolicola (strain 1448A / Race 6)</name>
    <dbReference type="NCBI Taxonomy" id="264730"/>
    <lineage>
        <taxon>Bacteria</taxon>
        <taxon>Pseudomonadati</taxon>
        <taxon>Pseudomonadota</taxon>
        <taxon>Gammaproteobacteria</taxon>
        <taxon>Pseudomonadales</taxon>
        <taxon>Pseudomonadaceae</taxon>
        <taxon>Pseudomonas</taxon>
    </lineage>
</organism>
<protein>
    <recommendedName>
        <fullName evidence="1">Large ribosomal subunit protein uL30</fullName>
    </recommendedName>
    <alternativeName>
        <fullName evidence="2">50S ribosomal protein L30</fullName>
    </alternativeName>
</protein>
<proteinExistence type="inferred from homology"/>
<accession>Q48D54</accession>
<sequence length="58" mass="6553">MATVKVTLIKSMTGRIPNHRLCIKGLGLRRIGHTVEVLDTPENRGMINKAYYMLRVEG</sequence>
<name>RL30_PSE14</name>
<evidence type="ECO:0000255" key="1">
    <source>
        <dbReference type="HAMAP-Rule" id="MF_01371"/>
    </source>
</evidence>
<evidence type="ECO:0000305" key="2"/>
<reference key="1">
    <citation type="journal article" date="2005" name="J. Bacteriol.">
        <title>Whole-genome sequence analysis of Pseudomonas syringae pv. phaseolicola 1448A reveals divergence among pathovars in genes involved in virulence and transposition.</title>
        <authorList>
            <person name="Joardar V."/>
            <person name="Lindeberg M."/>
            <person name="Jackson R.W."/>
            <person name="Selengut J."/>
            <person name="Dodson R."/>
            <person name="Brinkac L.M."/>
            <person name="Daugherty S.C."/>
            <person name="DeBoy R.T."/>
            <person name="Durkin A.S."/>
            <person name="Gwinn Giglio M."/>
            <person name="Madupu R."/>
            <person name="Nelson W.C."/>
            <person name="Rosovitz M.J."/>
            <person name="Sullivan S.A."/>
            <person name="Crabtree J."/>
            <person name="Creasy T."/>
            <person name="Davidsen T.M."/>
            <person name="Haft D.H."/>
            <person name="Zafar N."/>
            <person name="Zhou L."/>
            <person name="Halpin R."/>
            <person name="Holley T."/>
            <person name="Khouri H.M."/>
            <person name="Feldblyum T.V."/>
            <person name="White O."/>
            <person name="Fraser C.M."/>
            <person name="Chatterjee A.K."/>
            <person name="Cartinhour S."/>
            <person name="Schneider D."/>
            <person name="Mansfield J.W."/>
            <person name="Collmer A."/>
            <person name="Buell R."/>
        </authorList>
    </citation>
    <scope>NUCLEOTIDE SEQUENCE [LARGE SCALE GENOMIC DNA]</scope>
    <source>
        <strain>1448A / Race 6</strain>
    </source>
</reference>
<feature type="chain" id="PRO_0000273830" description="Large ribosomal subunit protein uL30">
    <location>
        <begin position="1"/>
        <end position="58"/>
    </location>
</feature>
<dbReference type="EMBL" id="CP000058">
    <property type="protein sequence ID" value="AAZ35543.1"/>
    <property type="molecule type" value="Genomic_DNA"/>
</dbReference>
<dbReference type="RefSeq" id="WP_002555471.1">
    <property type="nucleotide sequence ID" value="NC_005773.3"/>
</dbReference>
<dbReference type="SMR" id="Q48D54"/>
<dbReference type="GeneID" id="77280356"/>
<dbReference type="KEGG" id="psp:PSPPH_4574"/>
<dbReference type="eggNOG" id="COG1841">
    <property type="taxonomic scope" value="Bacteria"/>
</dbReference>
<dbReference type="HOGENOM" id="CLU_131047_1_4_6"/>
<dbReference type="Proteomes" id="UP000000551">
    <property type="component" value="Chromosome"/>
</dbReference>
<dbReference type="GO" id="GO:0015934">
    <property type="term" value="C:large ribosomal subunit"/>
    <property type="evidence" value="ECO:0007669"/>
    <property type="project" value="InterPro"/>
</dbReference>
<dbReference type="GO" id="GO:0003735">
    <property type="term" value="F:structural constituent of ribosome"/>
    <property type="evidence" value="ECO:0007669"/>
    <property type="project" value="InterPro"/>
</dbReference>
<dbReference type="GO" id="GO:0006412">
    <property type="term" value="P:translation"/>
    <property type="evidence" value="ECO:0007669"/>
    <property type="project" value="UniProtKB-UniRule"/>
</dbReference>
<dbReference type="CDD" id="cd01658">
    <property type="entry name" value="Ribosomal_L30"/>
    <property type="match status" value="1"/>
</dbReference>
<dbReference type="FunFam" id="3.30.1390.20:FF:000001">
    <property type="entry name" value="50S ribosomal protein L30"/>
    <property type="match status" value="1"/>
</dbReference>
<dbReference type="Gene3D" id="3.30.1390.20">
    <property type="entry name" value="Ribosomal protein L30, ferredoxin-like fold domain"/>
    <property type="match status" value="1"/>
</dbReference>
<dbReference type="HAMAP" id="MF_01371_B">
    <property type="entry name" value="Ribosomal_uL30_B"/>
    <property type="match status" value="1"/>
</dbReference>
<dbReference type="InterPro" id="IPR036919">
    <property type="entry name" value="Ribo_uL30_ferredoxin-like_sf"/>
</dbReference>
<dbReference type="InterPro" id="IPR005996">
    <property type="entry name" value="Ribosomal_uL30_bac-type"/>
</dbReference>
<dbReference type="InterPro" id="IPR016082">
    <property type="entry name" value="Ribosomal_uL30_ferredoxin-like"/>
</dbReference>
<dbReference type="NCBIfam" id="TIGR01308">
    <property type="entry name" value="rpmD_bact"/>
    <property type="match status" value="1"/>
</dbReference>
<dbReference type="Pfam" id="PF00327">
    <property type="entry name" value="Ribosomal_L30"/>
    <property type="match status" value="1"/>
</dbReference>
<dbReference type="PIRSF" id="PIRSF002211">
    <property type="entry name" value="Ribosomal_L30_bac-type"/>
    <property type="match status" value="1"/>
</dbReference>
<dbReference type="SUPFAM" id="SSF55129">
    <property type="entry name" value="Ribosomal protein L30p/L7e"/>
    <property type="match status" value="1"/>
</dbReference>
<keyword id="KW-0687">Ribonucleoprotein</keyword>
<keyword id="KW-0689">Ribosomal protein</keyword>